<comment type="function">
    <text evidence="4 5">Involved in ER to Golgi vesicle-mediated transport by either facilitating USO1-dependent and -independent tethering or increasing target accuracy of fusion events of COPII-coated vesicles.</text>
</comment>
<comment type="subunit">
    <text evidence="4 5">Interacts with GRH1 (via C-terminus), probably forming a heterooligomer consisting of a GRH1 dimer and a BUG1 dimer.</text>
</comment>
<comment type="interaction">
    <interactant intactId="EBI-32271">
        <id>Q12191</id>
    </interactant>
    <interactant intactId="EBI-32271">
        <id>Q12191</id>
        <label>BUG1</label>
    </interactant>
    <organismsDiffer>false</organismsDiffer>
    <experiments>2</experiments>
</comment>
<comment type="interaction">
    <interactant intactId="EBI-32271">
        <id>Q12191</id>
    </interactant>
    <interactant intactId="EBI-32083">
        <id>Q04410</id>
        <label>GRH1</label>
    </interactant>
    <organismsDiffer>false</organismsDiffer>
    <experiments>5</experiments>
</comment>
<comment type="subcellular location">
    <subcellularLocation>
        <location>Cytoplasm</location>
    </subcellularLocation>
    <subcellularLocation>
        <location>Golgi apparatus</location>
        <location>cis-Golgi network membrane</location>
        <topology>Peripheral membrane protein</topology>
    </subcellularLocation>
    <text>Localizes to cytoplasm in a punctate pattern. Localizes to cis-Golgi together with GRH1.</text>
</comment>
<comment type="miscellaneous">
    <text evidence="3">Present with 5220 molecules/cell in log phase SD medium.</text>
</comment>
<organism>
    <name type="scientific">Saccharomyces cerevisiae (strain ATCC 204508 / S288c)</name>
    <name type="common">Baker's yeast</name>
    <dbReference type="NCBI Taxonomy" id="559292"/>
    <lineage>
        <taxon>Eukaryota</taxon>
        <taxon>Fungi</taxon>
        <taxon>Dikarya</taxon>
        <taxon>Ascomycota</taxon>
        <taxon>Saccharomycotina</taxon>
        <taxon>Saccharomycetes</taxon>
        <taxon>Saccharomycetales</taxon>
        <taxon>Saccharomycetaceae</taxon>
        <taxon>Saccharomyces</taxon>
    </lineage>
</organism>
<evidence type="ECO:0000255" key="1"/>
<evidence type="ECO:0000256" key="2">
    <source>
        <dbReference type="SAM" id="MobiDB-lite"/>
    </source>
</evidence>
<evidence type="ECO:0000269" key="3">
    <source>
    </source>
</evidence>
<evidence type="ECO:0000269" key="4">
    <source>
    </source>
</evidence>
<evidence type="ECO:0000269" key="5">
    <source>
    </source>
</evidence>
<evidence type="ECO:0000303" key="6">
    <source>
    </source>
</evidence>
<evidence type="ECO:0000305" key="7"/>
<evidence type="ECO:0000312" key="8">
    <source>
        <dbReference type="EMBL" id="CAA64914.1"/>
    </source>
</evidence>
<evidence type="ECO:0000312" key="9">
    <source>
        <dbReference type="EMBL" id="CAA98666.1"/>
    </source>
</evidence>
<evidence type="ECO:0007744" key="10">
    <source>
    </source>
</evidence>
<evidence type="ECO:0007744" key="11">
    <source>
    </source>
</evidence>
<evidence type="ECO:0007744" key="12">
    <source>
    </source>
</evidence>
<evidence type="ECO:0007744" key="13">
    <source>
    </source>
</evidence>
<keyword id="KW-0007">Acetylation</keyword>
<keyword id="KW-0175">Coiled coil</keyword>
<keyword id="KW-0963">Cytoplasm</keyword>
<keyword id="KW-0931">ER-Golgi transport</keyword>
<keyword id="KW-0333">Golgi apparatus</keyword>
<keyword id="KW-0472">Membrane</keyword>
<keyword id="KW-0597">Phosphoprotein</keyword>
<keyword id="KW-1185">Reference proteome</keyword>
<keyword id="KW-0813">Transport</keyword>
<protein>
    <recommendedName>
        <fullName>Binder of USO1 and GRH1 protein 1</fullName>
    </recommendedName>
</protein>
<dbReference type="EMBL" id="X95644">
    <property type="protein sequence ID" value="CAA64914.1"/>
    <property type="molecule type" value="Genomic_DNA"/>
</dbReference>
<dbReference type="EMBL" id="Z74147">
    <property type="protein sequence ID" value="CAA98666.1"/>
    <property type="molecule type" value="Genomic_DNA"/>
</dbReference>
<dbReference type="EMBL" id="BK006938">
    <property type="protein sequence ID" value="DAA11761.1"/>
    <property type="molecule type" value="Genomic_DNA"/>
</dbReference>
<dbReference type="PIR" id="S67641">
    <property type="entry name" value="S67641"/>
</dbReference>
<dbReference type="RefSeq" id="NP_010184.1">
    <property type="nucleotide sequence ID" value="NM_001180158.1"/>
</dbReference>
<dbReference type="SMR" id="Q12191"/>
<dbReference type="BioGRID" id="31963">
    <property type="interactions" value="247"/>
</dbReference>
<dbReference type="ComplexPortal" id="CPX-1125">
    <property type="entry name" value="BUG1-GRH1 complex"/>
</dbReference>
<dbReference type="DIP" id="DIP-3001N"/>
<dbReference type="FunCoup" id="Q12191">
    <property type="interactions" value="32"/>
</dbReference>
<dbReference type="IntAct" id="Q12191">
    <property type="interactions" value="4"/>
</dbReference>
<dbReference type="MINT" id="Q12191"/>
<dbReference type="STRING" id="4932.YDL099W"/>
<dbReference type="iPTMnet" id="Q12191"/>
<dbReference type="PaxDb" id="4932-YDL099W"/>
<dbReference type="PeptideAtlas" id="Q12191"/>
<dbReference type="EnsemblFungi" id="YDL099W_mRNA">
    <property type="protein sequence ID" value="YDL099W"/>
    <property type="gene ID" value="YDL099W"/>
</dbReference>
<dbReference type="GeneID" id="851459"/>
<dbReference type="KEGG" id="sce:YDL099W"/>
<dbReference type="AGR" id="SGD:S000002257"/>
<dbReference type="SGD" id="S000002257">
    <property type="gene designation" value="BUG1"/>
</dbReference>
<dbReference type="VEuPathDB" id="FungiDB:YDL099W"/>
<dbReference type="eggNOG" id="ENOG502S1CR">
    <property type="taxonomic scope" value="Eukaryota"/>
</dbReference>
<dbReference type="HOGENOM" id="CLU_076662_0_0_1"/>
<dbReference type="InParanoid" id="Q12191"/>
<dbReference type="OMA" id="NWNVDMT"/>
<dbReference type="OrthoDB" id="4036611at2759"/>
<dbReference type="BioCyc" id="YEAST:G3O-29502-MONOMER"/>
<dbReference type="BioGRID-ORCS" id="851459">
    <property type="hits" value="1 hit in 10 CRISPR screens"/>
</dbReference>
<dbReference type="PRO" id="PR:Q12191"/>
<dbReference type="Proteomes" id="UP000002311">
    <property type="component" value="Chromosome IV"/>
</dbReference>
<dbReference type="RNAct" id="Q12191">
    <property type="molecule type" value="protein"/>
</dbReference>
<dbReference type="GO" id="GO:0005801">
    <property type="term" value="C:cis-Golgi network"/>
    <property type="evidence" value="ECO:0000314"/>
    <property type="project" value="SGD"/>
</dbReference>
<dbReference type="GO" id="GO:0033106">
    <property type="term" value="C:cis-Golgi network membrane"/>
    <property type="evidence" value="ECO:0000314"/>
    <property type="project" value="ComplexPortal"/>
</dbReference>
<dbReference type="GO" id="GO:0106103">
    <property type="term" value="C:COPII vesicles tethering complex"/>
    <property type="evidence" value="ECO:0000353"/>
    <property type="project" value="ComplexPortal"/>
</dbReference>
<dbReference type="GO" id="GO:0005737">
    <property type="term" value="C:cytoplasm"/>
    <property type="evidence" value="ECO:0007005"/>
    <property type="project" value="SGD"/>
</dbReference>
<dbReference type="GO" id="GO:0042802">
    <property type="term" value="F:identical protein binding"/>
    <property type="evidence" value="ECO:0000353"/>
    <property type="project" value="IntAct"/>
</dbReference>
<dbReference type="GO" id="GO:0006888">
    <property type="term" value="P:endoplasmic reticulum to Golgi vesicle-mediated transport"/>
    <property type="evidence" value="ECO:0000315"/>
    <property type="project" value="SGD"/>
</dbReference>
<dbReference type="GO" id="GO:0007030">
    <property type="term" value="P:Golgi organization"/>
    <property type="evidence" value="ECO:0000303"/>
    <property type="project" value="ComplexPortal"/>
</dbReference>
<dbReference type="GO" id="GO:0009306">
    <property type="term" value="P:protein secretion"/>
    <property type="evidence" value="ECO:0000315"/>
    <property type="project" value="SGD"/>
</dbReference>
<proteinExistence type="evidence at protein level"/>
<accession>Q12191</accession>
<accession>D6VRQ1</accession>
<feature type="initiator methionine" description="Removed" evidence="13">
    <location>
        <position position="1"/>
    </location>
</feature>
<feature type="chain" id="PRO_0000270973" description="Binder of USO1 and GRH1 protein 1">
    <location>
        <begin position="2"/>
        <end position="341"/>
    </location>
</feature>
<feature type="region of interest" description="Disordered" evidence="2">
    <location>
        <begin position="1"/>
        <end position="181"/>
    </location>
</feature>
<feature type="coiled-coil region" evidence="1">
    <location>
        <begin position="2"/>
        <end position="41"/>
    </location>
</feature>
<feature type="coiled-coil region" evidence="1">
    <location>
        <begin position="188"/>
        <end position="272"/>
    </location>
</feature>
<feature type="compositionally biased region" description="Basic and acidic residues" evidence="2">
    <location>
        <begin position="7"/>
        <end position="26"/>
    </location>
</feature>
<feature type="compositionally biased region" description="Basic residues" evidence="2">
    <location>
        <begin position="27"/>
        <end position="39"/>
    </location>
</feature>
<feature type="compositionally biased region" description="Polar residues" evidence="2">
    <location>
        <begin position="69"/>
        <end position="78"/>
    </location>
</feature>
<feature type="compositionally biased region" description="Acidic residues" evidence="2">
    <location>
        <begin position="79"/>
        <end position="91"/>
    </location>
</feature>
<feature type="compositionally biased region" description="Basic and acidic residues" evidence="2">
    <location>
        <begin position="118"/>
        <end position="132"/>
    </location>
</feature>
<feature type="compositionally biased region" description="Polar residues" evidence="2">
    <location>
        <begin position="158"/>
        <end position="171"/>
    </location>
</feature>
<feature type="modified residue" description="N-acetylserine" evidence="13">
    <location>
        <position position="2"/>
    </location>
</feature>
<feature type="modified residue" description="Phosphoserine" evidence="10 11 12">
    <location>
        <position position="87"/>
    </location>
</feature>
<feature type="modified residue" description="Phosphoserine" evidence="12">
    <location>
        <position position="170"/>
    </location>
</feature>
<feature type="modified residue" description="Phosphothreonine" evidence="12">
    <location>
        <position position="292"/>
    </location>
</feature>
<reference evidence="8" key="1">
    <citation type="journal article" date="1996" name="Yeast">
        <title>The sequence of a 16,691 bp segment of Saccharomyces cerevisiae chromosome IV identifies the DUN1, PMT1, PMT5, SRP14 and DPR1 genes, and five new open reading frames.</title>
        <authorList>
            <person name="Boskovic J."/>
            <person name="Soler-Mira A."/>
            <person name="Garcia-Cantalejo J.M."/>
            <person name="Ballesta J.P.G."/>
            <person name="Jimenez A."/>
            <person name="Remacha M.A."/>
        </authorList>
    </citation>
    <scope>NUCLEOTIDE SEQUENCE [GENOMIC DNA]</scope>
    <source>
        <strain evidence="8">ATCC 96604 / S288c / FY1679</strain>
    </source>
</reference>
<reference evidence="9" key="2">
    <citation type="journal article" date="1997" name="Nature">
        <title>The nucleotide sequence of Saccharomyces cerevisiae chromosome IV.</title>
        <authorList>
            <person name="Jacq C."/>
            <person name="Alt-Moerbe J."/>
            <person name="Andre B."/>
            <person name="Arnold W."/>
            <person name="Bahr A."/>
            <person name="Ballesta J.P.G."/>
            <person name="Bargues M."/>
            <person name="Baron L."/>
            <person name="Becker A."/>
            <person name="Biteau N."/>
            <person name="Bloecker H."/>
            <person name="Blugeon C."/>
            <person name="Boskovic J."/>
            <person name="Brandt P."/>
            <person name="Brueckner M."/>
            <person name="Buitrago M.J."/>
            <person name="Coster F."/>
            <person name="Delaveau T."/>
            <person name="del Rey F."/>
            <person name="Dujon B."/>
            <person name="Eide L.G."/>
            <person name="Garcia-Cantalejo J.M."/>
            <person name="Goffeau A."/>
            <person name="Gomez-Peris A."/>
            <person name="Granotier C."/>
            <person name="Hanemann V."/>
            <person name="Hankeln T."/>
            <person name="Hoheisel J.D."/>
            <person name="Jaeger W."/>
            <person name="Jimenez A."/>
            <person name="Jonniaux J.-L."/>
            <person name="Kraemer C."/>
            <person name="Kuester H."/>
            <person name="Laamanen P."/>
            <person name="Legros Y."/>
            <person name="Louis E.J."/>
            <person name="Moeller-Rieker S."/>
            <person name="Monnet A."/>
            <person name="Moro M."/>
            <person name="Mueller-Auer S."/>
            <person name="Nussbaumer B."/>
            <person name="Paricio N."/>
            <person name="Paulin L."/>
            <person name="Perea J."/>
            <person name="Perez-Alonso M."/>
            <person name="Perez-Ortin J.E."/>
            <person name="Pohl T.M."/>
            <person name="Prydz H."/>
            <person name="Purnelle B."/>
            <person name="Rasmussen S.W."/>
            <person name="Remacha M.A."/>
            <person name="Revuelta J.L."/>
            <person name="Rieger M."/>
            <person name="Salom D."/>
            <person name="Saluz H.P."/>
            <person name="Saiz J.E."/>
            <person name="Saren A.-M."/>
            <person name="Schaefer M."/>
            <person name="Scharfe M."/>
            <person name="Schmidt E.R."/>
            <person name="Schneider C."/>
            <person name="Scholler P."/>
            <person name="Schwarz S."/>
            <person name="Soler-Mira A."/>
            <person name="Urrestarazu L.A."/>
            <person name="Verhasselt P."/>
            <person name="Vissers S."/>
            <person name="Voet M."/>
            <person name="Volckaert G."/>
            <person name="Wagner G."/>
            <person name="Wambutt R."/>
            <person name="Wedler E."/>
            <person name="Wedler H."/>
            <person name="Woelfl S."/>
            <person name="Harris D.E."/>
            <person name="Bowman S."/>
            <person name="Brown D."/>
            <person name="Churcher C.M."/>
            <person name="Connor R."/>
            <person name="Dedman K."/>
            <person name="Gentles S."/>
            <person name="Hamlin N."/>
            <person name="Hunt S."/>
            <person name="Jones L."/>
            <person name="McDonald S."/>
            <person name="Murphy L.D."/>
            <person name="Niblett D."/>
            <person name="Odell C."/>
            <person name="Oliver K."/>
            <person name="Rajandream M.A."/>
            <person name="Richards C."/>
            <person name="Shore L."/>
            <person name="Walsh S.V."/>
            <person name="Barrell B.G."/>
            <person name="Dietrich F.S."/>
            <person name="Mulligan J.T."/>
            <person name="Allen E."/>
            <person name="Araujo R."/>
            <person name="Aviles E."/>
            <person name="Berno A."/>
            <person name="Carpenter J."/>
            <person name="Chen E."/>
            <person name="Cherry J.M."/>
            <person name="Chung E."/>
            <person name="Duncan M."/>
            <person name="Hunicke-Smith S."/>
            <person name="Hyman R.W."/>
            <person name="Komp C."/>
            <person name="Lashkari D."/>
            <person name="Lew H."/>
            <person name="Lin D."/>
            <person name="Mosedale D."/>
            <person name="Nakahara K."/>
            <person name="Namath A."/>
            <person name="Oefner P."/>
            <person name="Oh C."/>
            <person name="Petel F.X."/>
            <person name="Roberts D."/>
            <person name="Schramm S."/>
            <person name="Schroeder M."/>
            <person name="Shogren T."/>
            <person name="Shroff N."/>
            <person name="Winant A."/>
            <person name="Yelton M.A."/>
            <person name="Botstein D."/>
            <person name="Davis R.W."/>
            <person name="Johnston M."/>
            <person name="Andrews S."/>
            <person name="Brinkman R."/>
            <person name="Cooper J."/>
            <person name="Ding H."/>
            <person name="Du Z."/>
            <person name="Favello A."/>
            <person name="Fulton L."/>
            <person name="Gattung S."/>
            <person name="Greco T."/>
            <person name="Hallsworth K."/>
            <person name="Hawkins J."/>
            <person name="Hillier L.W."/>
            <person name="Jier M."/>
            <person name="Johnson D."/>
            <person name="Johnston L."/>
            <person name="Kirsten J."/>
            <person name="Kucaba T."/>
            <person name="Langston Y."/>
            <person name="Latreille P."/>
            <person name="Le T."/>
            <person name="Mardis E."/>
            <person name="Menezes S."/>
            <person name="Miller N."/>
            <person name="Nhan M."/>
            <person name="Pauley A."/>
            <person name="Peluso D."/>
            <person name="Rifkin L."/>
            <person name="Riles L."/>
            <person name="Taich A."/>
            <person name="Trevaskis E."/>
            <person name="Vignati D."/>
            <person name="Wilcox L."/>
            <person name="Wohldman P."/>
            <person name="Vaudin M."/>
            <person name="Wilson R."/>
            <person name="Waterston R."/>
            <person name="Albermann K."/>
            <person name="Hani J."/>
            <person name="Heumann K."/>
            <person name="Kleine K."/>
            <person name="Mewes H.-W."/>
            <person name="Zollner A."/>
            <person name="Zaccaria P."/>
        </authorList>
    </citation>
    <scope>NUCLEOTIDE SEQUENCE [LARGE SCALE GENOMIC DNA]</scope>
    <source>
        <strain>ATCC 204508 / S288c</strain>
    </source>
</reference>
<reference key="3">
    <citation type="journal article" date="2014" name="G3 (Bethesda)">
        <title>The reference genome sequence of Saccharomyces cerevisiae: Then and now.</title>
        <authorList>
            <person name="Engel S.R."/>
            <person name="Dietrich F.S."/>
            <person name="Fisk D.G."/>
            <person name="Binkley G."/>
            <person name="Balakrishnan R."/>
            <person name="Costanzo M.C."/>
            <person name="Dwight S.S."/>
            <person name="Hitz B.C."/>
            <person name="Karra K."/>
            <person name="Nash R.S."/>
            <person name="Weng S."/>
            <person name="Wong E.D."/>
            <person name="Lloyd P."/>
            <person name="Skrzypek M.S."/>
            <person name="Miyasato S.R."/>
            <person name="Simison M."/>
            <person name="Cherry J.M."/>
        </authorList>
    </citation>
    <scope>GENOME REANNOTATION</scope>
    <source>
        <strain>ATCC 204508 / S288c</strain>
    </source>
</reference>
<reference evidence="7" key="4">
    <citation type="journal article" date="2003" name="Nature">
        <title>Global analysis of protein localization in budding yeast.</title>
        <authorList>
            <person name="Huh W.-K."/>
            <person name="Falvo J.V."/>
            <person name="Gerke L.C."/>
            <person name="Carroll A.S."/>
            <person name="Howson R.W."/>
            <person name="Weissman J.S."/>
            <person name="O'Shea E.K."/>
        </authorList>
    </citation>
    <scope>SUBCELLULAR LOCATION [LARGE SCALE ANALYSIS]</scope>
</reference>
<reference evidence="7" key="5">
    <citation type="journal article" date="2003" name="Nature">
        <title>Global analysis of protein expression in yeast.</title>
        <authorList>
            <person name="Ghaemmaghami S."/>
            <person name="Huh W.-K."/>
            <person name="Bower K."/>
            <person name="Howson R.W."/>
            <person name="Belle A."/>
            <person name="Dephoure N."/>
            <person name="O'Shea E.K."/>
            <person name="Weissman J.S."/>
        </authorList>
    </citation>
    <scope>LEVEL OF PROTEIN EXPRESSION [LARGE SCALE ANALYSIS]</scope>
</reference>
<reference evidence="7" key="6">
    <citation type="journal article" date="2005" name="Cell">
        <title>Exploration of the function and organization of the yeast early secretory pathway through an epistatic miniarray profile.</title>
        <authorList>
            <person name="Schuldiner M."/>
            <person name="Collins S.R."/>
            <person name="Thompson N.J."/>
            <person name="Denic V."/>
            <person name="Bhamidipati A."/>
            <person name="Punna T."/>
            <person name="Ihmels J."/>
            <person name="Andrews B."/>
            <person name="Boone C."/>
            <person name="Greenblatt J.F."/>
            <person name="Weissman J.S."/>
            <person name="Krogan N.J."/>
        </authorList>
    </citation>
    <scope>FUNCTION</scope>
    <scope>INTERACTION WITH GRH1</scope>
</reference>
<reference key="7">
    <citation type="journal article" date="2007" name="J. Cell Biol.">
        <title>The yeast orthologue of GRASP65 forms a complex with a coiled-coil protein that contributes to ER to Golgi traffic.</title>
        <authorList>
            <person name="Behnia R."/>
            <person name="Barr F.A."/>
            <person name="Flanagan J.J."/>
            <person name="Barlowe C."/>
            <person name="Munro S."/>
        </authorList>
    </citation>
    <scope>FUNCTION</scope>
    <scope>INTERACTION WITH GRH1</scope>
    <scope>SUBCELLULAR LOCATION</scope>
</reference>
<reference key="8">
    <citation type="journal article" date="2007" name="J. Proteome Res.">
        <title>Large-scale phosphorylation analysis of alpha-factor-arrested Saccharomyces cerevisiae.</title>
        <authorList>
            <person name="Li X."/>
            <person name="Gerber S.A."/>
            <person name="Rudner A.D."/>
            <person name="Beausoleil S.A."/>
            <person name="Haas W."/>
            <person name="Villen J."/>
            <person name="Elias J.E."/>
            <person name="Gygi S.P."/>
        </authorList>
    </citation>
    <scope>PHOSPHORYLATION [LARGE SCALE ANALYSIS] AT SER-87</scope>
    <scope>IDENTIFICATION BY MASS SPECTROMETRY [LARGE SCALE ANALYSIS]</scope>
    <source>
        <strain>ADR376</strain>
    </source>
</reference>
<reference key="9">
    <citation type="journal article" date="2008" name="Mol. Cell. Proteomics">
        <title>A multidimensional chromatography technology for in-depth phosphoproteome analysis.</title>
        <authorList>
            <person name="Albuquerque C.P."/>
            <person name="Smolka M.B."/>
            <person name="Payne S.H."/>
            <person name="Bafna V."/>
            <person name="Eng J."/>
            <person name="Zhou H."/>
        </authorList>
    </citation>
    <scope>PHOSPHORYLATION [LARGE SCALE ANALYSIS] AT SER-87</scope>
    <scope>IDENTIFICATION BY MASS SPECTROMETRY [LARGE SCALE ANALYSIS]</scope>
</reference>
<reference key="10">
    <citation type="journal article" date="2009" name="Science">
        <title>Global analysis of Cdk1 substrate phosphorylation sites provides insights into evolution.</title>
        <authorList>
            <person name="Holt L.J."/>
            <person name="Tuch B.B."/>
            <person name="Villen J."/>
            <person name="Johnson A.D."/>
            <person name="Gygi S.P."/>
            <person name="Morgan D.O."/>
        </authorList>
    </citation>
    <scope>PHOSPHORYLATION [LARGE SCALE ANALYSIS] AT SER-87; SER-170 AND THR-292</scope>
    <scope>IDENTIFICATION BY MASS SPECTROMETRY [LARGE SCALE ANALYSIS]</scope>
</reference>
<reference key="11">
    <citation type="journal article" date="2012" name="Proc. Natl. Acad. Sci. U.S.A.">
        <title>N-terminal acetylome analyses and functional insights of the N-terminal acetyltransferase NatB.</title>
        <authorList>
            <person name="Van Damme P."/>
            <person name="Lasa M."/>
            <person name="Polevoda B."/>
            <person name="Gazquez C."/>
            <person name="Elosegui-Artola A."/>
            <person name="Kim D.S."/>
            <person name="De Juan-Pardo E."/>
            <person name="Demeyer K."/>
            <person name="Hole K."/>
            <person name="Larrea E."/>
            <person name="Timmerman E."/>
            <person name="Prieto J."/>
            <person name="Arnesen T."/>
            <person name="Sherman F."/>
            <person name="Gevaert K."/>
            <person name="Aldabe R."/>
        </authorList>
    </citation>
    <scope>ACETYLATION [LARGE SCALE ANALYSIS] AT SER-2</scope>
    <scope>CLEAVAGE OF INITIATOR METHIONINE [LARGE SCALE ANALYSIS]</scope>
    <scope>IDENTIFICATION BY MASS SPECTROMETRY [LARGE SCALE ANALYSIS]</scope>
</reference>
<sequence>MSEQESDEVKRMKQLEEARKRVEELKKKKNKKNKGKKNKNSSATGSIGSETPDLEGTPGEESTQEETVKANSTKSENNDQNDVDEESEEKEIEQVKSDPSGTTEKDIEEINSTSSNVGKDDAENTKKEEVQEVIKNNNDEQTADAGKTIEPQEEKKIVQTQEGNEPSNTSEAADDLFANDGNEESDFLTTIKKQKEEDELTKLRAENEKLTQENKQLKFLNMENETTVDDLQDQLQEKEDIINGLQNDLQTARDELIAAVEKLKLAEAKAARNTTATPIQFADFNTSSNNLTPSQSVTNSGTQVAHGNNMEVDRVMLNKWRQWNVDMTTWRSIGSGPIMEF</sequence>
<gene>
    <name evidence="6" type="primary">BUG1</name>
    <name type="ordered locus">YDL099W</name>
</gene>
<name>BUG1_YEAST</name>